<reference key="1">
    <citation type="journal article" date="2007" name="PLoS ONE">
        <title>Paradoxical DNA repair and peroxide resistance gene conservation in Bacillus pumilus SAFR-032.</title>
        <authorList>
            <person name="Gioia J."/>
            <person name="Yerrapragada S."/>
            <person name="Qin X."/>
            <person name="Jiang H."/>
            <person name="Igboeli O.C."/>
            <person name="Muzny D."/>
            <person name="Dugan-Rocha S."/>
            <person name="Ding Y."/>
            <person name="Hawes A."/>
            <person name="Liu W."/>
            <person name="Perez L."/>
            <person name="Kovar C."/>
            <person name="Dinh H."/>
            <person name="Lee S."/>
            <person name="Nazareth L."/>
            <person name="Blyth P."/>
            <person name="Holder M."/>
            <person name="Buhay C."/>
            <person name="Tirumalai M.R."/>
            <person name="Liu Y."/>
            <person name="Dasgupta I."/>
            <person name="Bokhetache L."/>
            <person name="Fujita M."/>
            <person name="Karouia F."/>
            <person name="Eswara Moorthy P."/>
            <person name="Siefert J."/>
            <person name="Uzman A."/>
            <person name="Buzumbo P."/>
            <person name="Verma A."/>
            <person name="Zwiya H."/>
            <person name="McWilliams B.D."/>
            <person name="Olowu A."/>
            <person name="Clinkenbeard K.D."/>
            <person name="Newcombe D."/>
            <person name="Golebiewski L."/>
            <person name="Petrosino J.F."/>
            <person name="Nicholson W.L."/>
            <person name="Fox G.E."/>
            <person name="Venkateswaran K."/>
            <person name="Highlander S.K."/>
            <person name="Weinstock G.M."/>
        </authorList>
    </citation>
    <scope>NUCLEOTIDE SEQUENCE [LARGE SCALE GENOMIC DNA]</scope>
    <source>
        <strain>SAFR-032</strain>
    </source>
</reference>
<sequence>MPQSVLKATSEDLKKMKSAYAHHLTDTLPPGALFQAKVPGCTITAYRSGKVLFQGQKAEAEASQFSHLKATDPKSSKTPAVTKYSPPSGIASMSVIGSDEVGTGDYFGPITVCAAYVDASHLALMKELGVKDSKGLKDPQIINIAKDLIKTIPFSLLVLRNEKYNAMQEKGMSQGKMKALLHNQVITSALEKLDGKQPEAILIDQFAEPGIYFKHLAGKKIIRERTYFSTKAEGIHLSVAAASIIARYAFLIEMDKLSEAAGFEIPKGAGPHVDKAAAKLIKLHGEEALRQFTKLHFANTQKAKKWL</sequence>
<protein>
    <recommendedName>
        <fullName evidence="1">Ribonuclease HIII</fullName>
        <shortName evidence="1">RNase HIII</shortName>
        <ecNumber evidence="1">3.1.26.4</ecNumber>
    </recommendedName>
</protein>
<gene>
    <name evidence="1" type="primary">rnhC</name>
    <name type="ordered locus">BPUM_2520</name>
</gene>
<organism>
    <name type="scientific">Bacillus pumilus (strain SAFR-032)</name>
    <dbReference type="NCBI Taxonomy" id="315750"/>
    <lineage>
        <taxon>Bacteria</taxon>
        <taxon>Bacillati</taxon>
        <taxon>Bacillota</taxon>
        <taxon>Bacilli</taxon>
        <taxon>Bacillales</taxon>
        <taxon>Bacillaceae</taxon>
        <taxon>Bacillus</taxon>
    </lineage>
</organism>
<evidence type="ECO:0000255" key="1">
    <source>
        <dbReference type="HAMAP-Rule" id="MF_00053"/>
    </source>
</evidence>
<evidence type="ECO:0000255" key="2">
    <source>
        <dbReference type="PROSITE-ProRule" id="PRU01319"/>
    </source>
</evidence>
<accession>A8FG15</accession>
<name>RNH3_BACP2</name>
<comment type="function">
    <text evidence="1">Endonuclease that specifically degrades the RNA of RNA-DNA hybrids.</text>
</comment>
<comment type="catalytic activity">
    <reaction evidence="1">
        <text>Endonucleolytic cleavage to 5'-phosphomonoester.</text>
        <dbReference type="EC" id="3.1.26.4"/>
    </reaction>
</comment>
<comment type="cofactor">
    <cofactor evidence="1">
        <name>Mn(2+)</name>
        <dbReference type="ChEBI" id="CHEBI:29035"/>
    </cofactor>
    <cofactor evidence="1">
        <name>Mg(2+)</name>
        <dbReference type="ChEBI" id="CHEBI:18420"/>
    </cofactor>
    <text evidence="1">Manganese or magnesium. Binds 1 divalent metal ion per monomer in the absence of substrate. May bind a second metal ion after substrate binding.</text>
</comment>
<comment type="subcellular location">
    <subcellularLocation>
        <location evidence="1">Cytoplasm</location>
    </subcellularLocation>
</comment>
<comment type="similarity">
    <text evidence="1">Belongs to the RNase HII family. RnhC subfamily.</text>
</comment>
<keyword id="KW-0963">Cytoplasm</keyword>
<keyword id="KW-0255">Endonuclease</keyword>
<keyword id="KW-0378">Hydrolase</keyword>
<keyword id="KW-0460">Magnesium</keyword>
<keyword id="KW-0479">Metal-binding</keyword>
<keyword id="KW-0540">Nuclease</keyword>
<proteinExistence type="inferred from homology"/>
<feature type="chain" id="PRO_1000057383" description="Ribonuclease HIII">
    <location>
        <begin position="1"/>
        <end position="307"/>
    </location>
</feature>
<feature type="domain" description="RNase H type-2" evidence="2">
    <location>
        <begin position="93"/>
        <end position="307"/>
    </location>
</feature>
<feature type="binding site" evidence="1">
    <location>
        <position position="99"/>
    </location>
    <ligand>
        <name>a divalent metal cation</name>
        <dbReference type="ChEBI" id="CHEBI:60240"/>
    </ligand>
</feature>
<feature type="binding site" evidence="1">
    <location>
        <position position="100"/>
    </location>
    <ligand>
        <name>a divalent metal cation</name>
        <dbReference type="ChEBI" id="CHEBI:60240"/>
    </ligand>
</feature>
<feature type="binding site" evidence="1">
    <location>
        <position position="204"/>
    </location>
    <ligand>
        <name>a divalent metal cation</name>
        <dbReference type="ChEBI" id="CHEBI:60240"/>
    </ligand>
</feature>
<dbReference type="EC" id="3.1.26.4" evidence="1"/>
<dbReference type="EMBL" id="CP000813">
    <property type="protein sequence ID" value="ABV63182.1"/>
    <property type="molecule type" value="Genomic_DNA"/>
</dbReference>
<dbReference type="SMR" id="A8FG15"/>
<dbReference type="STRING" id="315750.BPUM_2520"/>
<dbReference type="KEGG" id="bpu:BPUM_2520"/>
<dbReference type="eggNOG" id="COG1039">
    <property type="taxonomic scope" value="Bacteria"/>
</dbReference>
<dbReference type="HOGENOM" id="CLU_059546_1_0_9"/>
<dbReference type="OrthoDB" id="9777935at2"/>
<dbReference type="Proteomes" id="UP000001355">
    <property type="component" value="Chromosome"/>
</dbReference>
<dbReference type="GO" id="GO:0005737">
    <property type="term" value="C:cytoplasm"/>
    <property type="evidence" value="ECO:0007669"/>
    <property type="project" value="UniProtKB-SubCell"/>
</dbReference>
<dbReference type="GO" id="GO:0032299">
    <property type="term" value="C:ribonuclease H2 complex"/>
    <property type="evidence" value="ECO:0007669"/>
    <property type="project" value="TreeGrafter"/>
</dbReference>
<dbReference type="GO" id="GO:0000287">
    <property type="term" value="F:magnesium ion binding"/>
    <property type="evidence" value="ECO:0007669"/>
    <property type="project" value="UniProtKB-UniRule"/>
</dbReference>
<dbReference type="GO" id="GO:0003723">
    <property type="term" value="F:RNA binding"/>
    <property type="evidence" value="ECO:0007669"/>
    <property type="project" value="InterPro"/>
</dbReference>
<dbReference type="GO" id="GO:0004523">
    <property type="term" value="F:RNA-DNA hybrid ribonuclease activity"/>
    <property type="evidence" value="ECO:0007669"/>
    <property type="project" value="UniProtKB-UniRule"/>
</dbReference>
<dbReference type="GO" id="GO:0043137">
    <property type="term" value="P:DNA replication, removal of RNA primer"/>
    <property type="evidence" value="ECO:0007669"/>
    <property type="project" value="TreeGrafter"/>
</dbReference>
<dbReference type="GO" id="GO:0006298">
    <property type="term" value="P:mismatch repair"/>
    <property type="evidence" value="ECO:0007669"/>
    <property type="project" value="TreeGrafter"/>
</dbReference>
<dbReference type="CDD" id="cd06590">
    <property type="entry name" value="RNase_HII_bacteria_HIII_like"/>
    <property type="match status" value="1"/>
</dbReference>
<dbReference type="CDD" id="cd14796">
    <property type="entry name" value="RNAse_HIII_N"/>
    <property type="match status" value="1"/>
</dbReference>
<dbReference type="FunFam" id="3.30.420.10:FF:000047">
    <property type="entry name" value="Ribonuclease HIII"/>
    <property type="match status" value="1"/>
</dbReference>
<dbReference type="Gene3D" id="3.30.420.10">
    <property type="entry name" value="Ribonuclease H-like superfamily/Ribonuclease H"/>
    <property type="match status" value="1"/>
</dbReference>
<dbReference type="Gene3D" id="3.30.310.10">
    <property type="entry name" value="TATA-Binding Protein"/>
    <property type="match status" value="1"/>
</dbReference>
<dbReference type="HAMAP" id="MF_00053">
    <property type="entry name" value="RNase_HIII"/>
    <property type="match status" value="1"/>
</dbReference>
<dbReference type="InterPro" id="IPR001352">
    <property type="entry name" value="RNase_HII/HIII"/>
</dbReference>
<dbReference type="InterPro" id="IPR024567">
    <property type="entry name" value="RNase_HII/HIII_dom"/>
</dbReference>
<dbReference type="InterPro" id="IPR004641">
    <property type="entry name" value="RNase_HIII"/>
</dbReference>
<dbReference type="InterPro" id="IPR024568">
    <property type="entry name" value="RNase_HIII_N"/>
</dbReference>
<dbReference type="InterPro" id="IPR012337">
    <property type="entry name" value="RNaseH-like_sf"/>
</dbReference>
<dbReference type="InterPro" id="IPR036397">
    <property type="entry name" value="RNaseH_sf"/>
</dbReference>
<dbReference type="InterPro" id="IPR012295">
    <property type="entry name" value="TBP_dom_sf"/>
</dbReference>
<dbReference type="NCBIfam" id="TIGR00716">
    <property type="entry name" value="rnhC"/>
    <property type="match status" value="1"/>
</dbReference>
<dbReference type="PANTHER" id="PTHR10954:SF23">
    <property type="entry name" value="RIBONUCLEASE"/>
    <property type="match status" value="1"/>
</dbReference>
<dbReference type="PANTHER" id="PTHR10954">
    <property type="entry name" value="RIBONUCLEASE H2 SUBUNIT A"/>
    <property type="match status" value="1"/>
</dbReference>
<dbReference type="Pfam" id="PF11858">
    <property type="entry name" value="DUF3378"/>
    <property type="match status" value="1"/>
</dbReference>
<dbReference type="Pfam" id="PF01351">
    <property type="entry name" value="RNase_HII"/>
    <property type="match status" value="1"/>
</dbReference>
<dbReference type="PIRSF" id="PIRSF037748">
    <property type="entry name" value="RnhC"/>
    <property type="match status" value="1"/>
</dbReference>
<dbReference type="SUPFAM" id="SSF53098">
    <property type="entry name" value="Ribonuclease H-like"/>
    <property type="match status" value="1"/>
</dbReference>
<dbReference type="PROSITE" id="PS51975">
    <property type="entry name" value="RNASE_H_2"/>
    <property type="match status" value="1"/>
</dbReference>